<comment type="catalytic activity">
    <reaction evidence="1">
        <text>tRNA(His) + L-histidine + ATP = L-histidyl-tRNA(His) + AMP + diphosphate + H(+)</text>
        <dbReference type="Rhea" id="RHEA:17313"/>
        <dbReference type="Rhea" id="RHEA-COMP:9665"/>
        <dbReference type="Rhea" id="RHEA-COMP:9689"/>
        <dbReference type="ChEBI" id="CHEBI:15378"/>
        <dbReference type="ChEBI" id="CHEBI:30616"/>
        <dbReference type="ChEBI" id="CHEBI:33019"/>
        <dbReference type="ChEBI" id="CHEBI:57595"/>
        <dbReference type="ChEBI" id="CHEBI:78442"/>
        <dbReference type="ChEBI" id="CHEBI:78527"/>
        <dbReference type="ChEBI" id="CHEBI:456215"/>
        <dbReference type="EC" id="6.1.1.21"/>
    </reaction>
</comment>
<comment type="subunit">
    <text evidence="1">Homodimer.</text>
</comment>
<comment type="subcellular location">
    <subcellularLocation>
        <location evidence="1">Cytoplasm</location>
    </subcellularLocation>
</comment>
<comment type="similarity">
    <text evidence="1">Belongs to the class-II aminoacyl-tRNA synthetase family.</text>
</comment>
<organism>
    <name type="scientific">Bacillus licheniformis (strain ATCC 14580 / DSM 13 / JCM 2505 / CCUG 7422 / NBRC 12200 / NCIMB 9375 / NCTC 10341 / NRRL NRS-1264 / Gibson 46)</name>
    <dbReference type="NCBI Taxonomy" id="279010"/>
    <lineage>
        <taxon>Bacteria</taxon>
        <taxon>Bacillati</taxon>
        <taxon>Bacillota</taxon>
        <taxon>Bacilli</taxon>
        <taxon>Bacillales</taxon>
        <taxon>Bacillaceae</taxon>
        <taxon>Bacillus</taxon>
    </lineage>
</organism>
<keyword id="KW-0030">Aminoacyl-tRNA synthetase</keyword>
<keyword id="KW-0067">ATP-binding</keyword>
<keyword id="KW-0963">Cytoplasm</keyword>
<keyword id="KW-0436">Ligase</keyword>
<keyword id="KW-0547">Nucleotide-binding</keyword>
<keyword id="KW-0648">Protein biosynthesis</keyword>
<keyword id="KW-1185">Reference proteome</keyword>
<name>SYH_BACLD</name>
<proteinExistence type="inferred from homology"/>
<sequence>MGFNIPRGTQDILPGESERWQYVEKIARETCHAYQYKEIRTPIFEHTELFSRGVGESTDIVQKEMYTFADKKGRSLTLRPEGTASAVRSFVENKLFANPVQPTKLYYIGPMFRYERPQTGRYRQFYQFGIEAIGSNDPAIDAEVIALAMSVYRKAGLSNLKLVINSLGDKESRTAHREALIRHFEPRIDEFCSDCQKRLRQNPLRILDCKKDRDHELLKTAPSILDYLNEESKAYFAKVQQYLTDIGIAFEVDPNLVRGLDYYNHTAFEIMSNAEGFGAITTLAGGGRYDGLTEEFGGPKAPGIGFAMSIERLLAALDAENVKVGADEGIDCYIVTLGDKAKDYSVSLLYKLREAGISAEIDYEQKKMKGQFKSADRLNAKYIAVLGEDELNQNQINVKDGKTGDQQAIGLDDFIRFLKTNTES</sequence>
<evidence type="ECO:0000255" key="1">
    <source>
        <dbReference type="HAMAP-Rule" id="MF_00127"/>
    </source>
</evidence>
<dbReference type="EC" id="6.1.1.21" evidence="1"/>
<dbReference type="EMBL" id="AE017333">
    <property type="protein sequence ID" value="AAU41751.1"/>
    <property type="molecule type" value="Genomic_DNA"/>
</dbReference>
<dbReference type="EMBL" id="CP000002">
    <property type="protein sequence ID" value="AAU24388.1"/>
    <property type="molecule type" value="Genomic_DNA"/>
</dbReference>
<dbReference type="RefSeq" id="WP_003183951.1">
    <property type="nucleotide sequence ID" value="NC_006322.1"/>
</dbReference>
<dbReference type="SMR" id="Q65GR3"/>
<dbReference type="STRING" id="279010.BL01122"/>
<dbReference type="GeneID" id="92860523"/>
<dbReference type="KEGG" id="bld:BLi02882"/>
<dbReference type="KEGG" id="bli:BL01122"/>
<dbReference type="eggNOG" id="COG0124">
    <property type="taxonomic scope" value="Bacteria"/>
</dbReference>
<dbReference type="HOGENOM" id="CLU_025113_1_1_9"/>
<dbReference type="Proteomes" id="UP000000606">
    <property type="component" value="Chromosome"/>
</dbReference>
<dbReference type="Bgee" id="BL01122">
    <property type="expression patterns" value="Expressed in skin epidermis and 12 other cell types or tissues"/>
</dbReference>
<dbReference type="GO" id="GO:0005737">
    <property type="term" value="C:cytoplasm"/>
    <property type="evidence" value="ECO:0007669"/>
    <property type="project" value="UniProtKB-SubCell"/>
</dbReference>
<dbReference type="GO" id="GO:0005524">
    <property type="term" value="F:ATP binding"/>
    <property type="evidence" value="ECO:0007669"/>
    <property type="project" value="UniProtKB-UniRule"/>
</dbReference>
<dbReference type="GO" id="GO:0140096">
    <property type="term" value="F:catalytic activity, acting on a protein"/>
    <property type="evidence" value="ECO:0007669"/>
    <property type="project" value="UniProtKB-ARBA"/>
</dbReference>
<dbReference type="GO" id="GO:0004821">
    <property type="term" value="F:histidine-tRNA ligase activity"/>
    <property type="evidence" value="ECO:0007669"/>
    <property type="project" value="UniProtKB-UniRule"/>
</dbReference>
<dbReference type="GO" id="GO:0016740">
    <property type="term" value="F:transferase activity"/>
    <property type="evidence" value="ECO:0007669"/>
    <property type="project" value="UniProtKB-ARBA"/>
</dbReference>
<dbReference type="GO" id="GO:0006427">
    <property type="term" value="P:histidyl-tRNA aminoacylation"/>
    <property type="evidence" value="ECO:0007669"/>
    <property type="project" value="UniProtKB-UniRule"/>
</dbReference>
<dbReference type="CDD" id="cd00773">
    <property type="entry name" value="HisRS-like_core"/>
    <property type="match status" value="1"/>
</dbReference>
<dbReference type="CDD" id="cd00859">
    <property type="entry name" value="HisRS_anticodon"/>
    <property type="match status" value="1"/>
</dbReference>
<dbReference type="FunFam" id="3.30.930.10:FF:000005">
    <property type="entry name" value="Histidine--tRNA ligase"/>
    <property type="match status" value="1"/>
</dbReference>
<dbReference type="Gene3D" id="3.40.50.800">
    <property type="entry name" value="Anticodon-binding domain"/>
    <property type="match status" value="1"/>
</dbReference>
<dbReference type="Gene3D" id="3.30.930.10">
    <property type="entry name" value="Bira Bifunctional Protein, Domain 2"/>
    <property type="match status" value="1"/>
</dbReference>
<dbReference type="HAMAP" id="MF_00127">
    <property type="entry name" value="His_tRNA_synth"/>
    <property type="match status" value="1"/>
</dbReference>
<dbReference type="InterPro" id="IPR006195">
    <property type="entry name" value="aa-tRNA-synth_II"/>
</dbReference>
<dbReference type="InterPro" id="IPR045864">
    <property type="entry name" value="aa-tRNA-synth_II/BPL/LPL"/>
</dbReference>
<dbReference type="InterPro" id="IPR004154">
    <property type="entry name" value="Anticodon-bd"/>
</dbReference>
<dbReference type="InterPro" id="IPR036621">
    <property type="entry name" value="Anticodon-bd_dom_sf"/>
</dbReference>
<dbReference type="InterPro" id="IPR015807">
    <property type="entry name" value="His-tRNA-ligase"/>
</dbReference>
<dbReference type="InterPro" id="IPR041715">
    <property type="entry name" value="HisRS-like_core"/>
</dbReference>
<dbReference type="InterPro" id="IPR004516">
    <property type="entry name" value="HisRS/HisZ"/>
</dbReference>
<dbReference type="InterPro" id="IPR033656">
    <property type="entry name" value="HisRS_anticodon"/>
</dbReference>
<dbReference type="NCBIfam" id="TIGR00442">
    <property type="entry name" value="hisS"/>
    <property type="match status" value="1"/>
</dbReference>
<dbReference type="PANTHER" id="PTHR43707:SF1">
    <property type="entry name" value="HISTIDINE--TRNA LIGASE, MITOCHONDRIAL-RELATED"/>
    <property type="match status" value="1"/>
</dbReference>
<dbReference type="PANTHER" id="PTHR43707">
    <property type="entry name" value="HISTIDYL-TRNA SYNTHETASE"/>
    <property type="match status" value="1"/>
</dbReference>
<dbReference type="Pfam" id="PF03129">
    <property type="entry name" value="HGTP_anticodon"/>
    <property type="match status" value="1"/>
</dbReference>
<dbReference type="Pfam" id="PF13393">
    <property type="entry name" value="tRNA-synt_His"/>
    <property type="match status" value="1"/>
</dbReference>
<dbReference type="PIRSF" id="PIRSF001549">
    <property type="entry name" value="His-tRNA_synth"/>
    <property type="match status" value="1"/>
</dbReference>
<dbReference type="SUPFAM" id="SSF52954">
    <property type="entry name" value="Class II aaRS ABD-related"/>
    <property type="match status" value="1"/>
</dbReference>
<dbReference type="SUPFAM" id="SSF55681">
    <property type="entry name" value="Class II aaRS and biotin synthetases"/>
    <property type="match status" value="1"/>
</dbReference>
<dbReference type="PROSITE" id="PS50862">
    <property type="entry name" value="AA_TRNA_LIGASE_II"/>
    <property type="match status" value="1"/>
</dbReference>
<feature type="chain" id="PRO_0000136104" description="Histidine--tRNA ligase">
    <location>
        <begin position="1"/>
        <end position="424"/>
    </location>
</feature>
<reference key="1">
    <citation type="journal article" date="2004" name="J. Mol. Microbiol. Biotechnol.">
        <title>The complete genome sequence of Bacillus licheniformis DSM13, an organism with great industrial potential.</title>
        <authorList>
            <person name="Veith B."/>
            <person name="Herzberg C."/>
            <person name="Steckel S."/>
            <person name="Feesche J."/>
            <person name="Maurer K.H."/>
            <person name="Ehrenreich P."/>
            <person name="Baeumer S."/>
            <person name="Henne A."/>
            <person name="Liesegang H."/>
            <person name="Merkl R."/>
            <person name="Ehrenreich A."/>
            <person name="Gottschalk G."/>
        </authorList>
    </citation>
    <scope>NUCLEOTIDE SEQUENCE [LARGE SCALE GENOMIC DNA]</scope>
    <source>
        <strain>ATCC 14580 / DSM 13 / JCM 2505 / CCUG 7422 / NBRC 12200 / NCIMB 9375 / NCTC 10341 / NRRL NRS-1264 / Gibson 46</strain>
    </source>
</reference>
<reference key="2">
    <citation type="journal article" date="2004" name="Genome Biol.">
        <title>Complete genome sequence of the industrial bacterium Bacillus licheniformis and comparisons with closely related Bacillus species.</title>
        <authorList>
            <person name="Rey M.W."/>
            <person name="Ramaiya P."/>
            <person name="Nelson B.A."/>
            <person name="Brody-Karpin S.D."/>
            <person name="Zaretsky E.J."/>
            <person name="Tang M."/>
            <person name="Lopez de Leon A."/>
            <person name="Xiang H."/>
            <person name="Gusti V."/>
            <person name="Clausen I.G."/>
            <person name="Olsen P.B."/>
            <person name="Rasmussen M.D."/>
            <person name="Andersen J.T."/>
            <person name="Joergensen P.L."/>
            <person name="Larsen T.S."/>
            <person name="Sorokin A."/>
            <person name="Bolotin A."/>
            <person name="Lapidus A."/>
            <person name="Galleron N."/>
            <person name="Ehrlich S.D."/>
            <person name="Berka R.M."/>
        </authorList>
    </citation>
    <scope>NUCLEOTIDE SEQUENCE [LARGE SCALE GENOMIC DNA]</scope>
    <source>
        <strain>ATCC 14580 / DSM 13 / JCM 2505 / CCUG 7422 / NBRC 12200 / NCIMB 9375 / NCTC 10341 / NRRL NRS-1264 / Gibson 46</strain>
    </source>
</reference>
<gene>
    <name evidence="1" type="primary">hisS</name>
    <name type="ordered locus">BLi02882</name>
    <name type="ordered locus">BL01122</name>
</gene>
<protein>
    <recommendedName>
        <fullName evidence="1">Histidine--tRNA ligase</fullName>
        <ecNumber evidence="1">6.1.1.21</ecNumber>
    </recommendedName>
    <alternativeName>
        <fullName evidence="1">Histidyl-tRNA synthetase</fullName>
        <shortName evidence="1">HisRS</shortName>
    </alternativeName>
</protein>
<accession>Q65GR3</accession>
<accession>Q62S72</accession>